<reference key="1">
    <citation type="journal article" date="1998" name="DNA Res.">
        <title>Complete sequence and gene organization of the genome of a hyper-thermophilic archaebacterium, Pyrococcus horikoshii OT3.</title>
        <authorList>
            <person name="Kawarabayasi Y."/>
            <person name="Sawada M."/>
            <person name="Horikawa H."/>
            <person name="Haikawa Y."/>
            <person name="Hino Y."/>
            <person name="Yamamoto S."/>
            <person name="Sekine M."/>
            <person name="Baba S."/>
            <person name="Kosugi H."/>
            <person name="Hosoyama A."/>
            <person name="Nagai Y."/>
            <person name="Sakai M."/>
            <person name="Ogura K."/>
            <person name="Otsuka R."/>
            <person name="Nakazawa H."/>
            <person name="Takamiya M."/>
            <person name="Ohfuku Y."/>
            <person name="Funahashi T."/>
            <person name="Tanaka T."/>
            <person name="Kudoh Y."/>
            <person name="Yamazaki J."/>
            <person name="Kushida N."/>
            <person name="Oguchi A."/>
            <person name="Aoki K."/>
            <person name="Yoshizawa T."/>
            <person name="Nakamura Y."/>
            <person name="Robb F.T."/>
            <person name="Horikoshi K."/>
            <person name="Masuchi Y."/>
            <person name="Shizuya H."/>
            <person name="Kikuchi H."/>
        </authorList>
    </citation>
    <scope>NUCLEOTIDE SEQUENCE [LARGE SCALE GENOMIC DNA]</scope>
    <source>
        <strain>ATCC 700860 / DSM 12428 / JCM 9974 / NBRC 100139 / OT-3</strain>
    </source>
</reference>
<keyword id="KW-0414">Isoprene biosynthesis</keyword>
<keyword id="KW-0521">NADP</keyword>
<keyword id="KW-0560">Oxidoreductase</keyword>
<protein>
    <recommendedName>
        <fullName>3-hydroxy-3-methylglutaryl-coenzyme A reductase</fullName>
        <shortName>HMG-CoA reductase</shortName>
        <ecNumber>1.1.1.34</ecNumber>
    </recommendedName>
</protein>
<dbReference type="EC" id="1.1.1.34"/>
<dbReference type="EMBL" id="BA000001">
    <property type="protein sequence ID" value="BAA30924.1"/>
    <property type="status" value="ALT_INIT"/>
    <property type="molecule type" value="Genomic_DNA"/>
</dbReference>
<dbReference type="PIR" id="E71191">
    <property type="entry name" value="E71191"/>
</dbReference>
<dbReference type="SMR" id="O59469"/>
<dbReference type="STRING" id="70601.gene:9378807"/>
<dbReference type="EnsemblBacteria" id="BAA30924">
    <property type="protein sequence ID" value="BAA30924"/>
    <property type="gene ID" value="BAA30924"/>
</dbReference>
<dbReference type="KEGG" id="pho:PH1805"/>
<dbReference type="eggNOG" id="arCOG04260">
    <property type="taxonomic scope" value="Archaea"/>
</dbReference>
<dbReference type="UniPathway" id="UPA00058">
    <property type="reaction ID" value="UER00103"/>
</dbReference>
<dbReference type="Proteomes" id="UP000000752">
    <property type="component" value="Chromosome"/>
</dbReference>
<dbReference type="GO" id="GO:0004420">
    <property type="term" value="F:hydroxymethylglutaryl-CoA reductase (NADPH) activity"/>
    <property type="evidence" value="ECO:0007669"/>
    <property type="project" value="UniProtKB-EC"/>
</dbReference>
<dbReference type="GO" id="GO:0015936">
    <property type="term" value="P:coenzyme A metabolic process"/>
    <property type="evidence" value="ECO:0007669"/>
    <property type="project" value="InterPro"/>
</dbReference>
<dbReference type="GO" id="GO:0008299">
    <property type="term" value="P:isoprenoid biosynthetic process"/>
    <property type="evidence" value="ECO:0007669"/>
    <property type="project" value="UniProtKB-KW"/>
</dbReference>
<dbReference type="GO" id="GO:0016126">
    <property type="term" value="P:sterol biosynthetic process"/>
    <property type="evidence" value="ECO:0007669"/>
    <property type="project" value="TreeGrafter"/>
</dbReference>
<dbReference type="CDD" id="cd00643">
    <property type="entry name" value="HMG-CoA_reductase_classI"/>
    <property type="match status" value="1"/>
</dbReference>
<dbReference type="FunFam" id="3.30.70.420:FF:000001">
    <property type="entry name" value="3-hydroxy-3-methylglutaryl coenzyme A reductase"/>
    <property type="match status" value="1"/>
</dbReference>
<dbReference type="Gene3D" id="3.90.770.10">
    <property type="entry name" value="3-hydroxy-3-methylglutaryl-coenzyme A Reductase, Chain A, domain 2"/>
    <property type="match status" value="1"/>
</dbReference>
<dbReference type="Gene3D" id="1.10.3270.10">
    <property type="entry name" value="HMGR, N-terminal domain"/>
    <property type="match status" value="1"/>
</dbReference>
<dbReference type="Gene3D" id="3.30.70.420">
    <property type="entry name" value="Hydroxymethylglutaryl-CoA reductase, class I/II, NAD/NADP-binding domain"/>
    <property type="match status" value="1"/>
</dbReference>
<dbReference type="InterPro" id="IPR002202">
    <property type="entry name" value="HMG_CoA_Rdtase"/>
</dbReference>
<dbReference type="InterPro" id="IPR023074">
    <property type="entry name" value="HMG_CoA_Rdtase_cat_sf"/>
</dbReference>
<dbReference type="InterPro" id="IPR023076">
    <property type="entry name" value="HMG_CoA_Rdtase_CS"/>
</dbReference>
<dbReference type="InterPro" id="IPR004554">
    <property type="entry name" value="HMG_CoA_Rdtase_eu_arc"/>
</dbReference>
<dbReference type="InterPro" id="IPR023282">
    <property type="entry name" value="HMG_CoA_Rdtase_N"/>
</dbReference>
<dbReference type="InterPro" id="IPR009023">
    <property type="entry name" value="HMG_CoA_Rdtase_NAD(P)-bd_sf"/>
</dbReference>
<dbReference type="InterPro" id="IPR009029">
    <property type="entry name" value="HMG_CoA_Rdtase_sub-bd_dom_sf"/>
</dbReference>
<dbReference type="NCBIfam" id="TIGR00533">
    <property type="entry name" value="HMG_CoA_R_NADP"/>
    <property type="match status" value="1"/>
</dbReference>
<dbReference type="PANTHER" id="PTHR10572">
    <property type="entry name" value="3-HYDROXY-3-METHYLGLUTARYL-COENZYME A REDUCTASE"/>
    <property type="match status" value="1"/>
</dbReference>
<dbReference type="PANTHER" id="PTHR10572:SF24">
    <property type="entry name" value="3-HYDROXY-3-METHYLGLUTARYL-COENZYME A REDUCTASE"/>
    <property type="match status" value="1"/>
</dbReference>
<dbReference type="Pfam" id="PF00368">
    <property type="entry name" value="HMG-CoA_red"/>
    <property type="match status" value="1"/>
</dbReference>
<dbReference type="PRINTS" id="PR00071">
    <property type="entry name" value="HMGCOARDTASE"/>
</dbReference>
<dbReference type="SUPFAM" id="SSF55035">
    <property type="entry name" value="NAD-binding domain of HMG-CoA reductase"/>
    <property type="match status" value="1"/>
</dbReference>
<dbReference type="SUPFAM" id="SSF56542">
    <property type="entry name" value="Substrate-binding domain of HMG-CoA reductase"/>
    <property type="match status" value="1"/>
</dbReference>
<dbReference type="PROSITE" id="PS00066">
    <property type="entry name" value="HMG_COA_REDUCTASE_1"/>
    <property type="match status" value="1"/>
</dbReference>
<dbReference type="PROSITE" id="PS00318">
    <property type="entry name" value="HMG_COA_REDUCTASE_2"/>
    <property type="match status" value="1"/>
</dbReference>
<dbReference type="PROSITE" id="PS50065">
    <property type="entry name" value="HMG_COA_REDUCTASE_4"/>
    <property type="match status" value="1"/>
</dbReference>
<name>HMDH_PYRHO</name>
<proteinExistence type="inferred from homology"/>
<comment type="function">
    <text evidence="1">Converts HMG-CoA to mevalonate.</text>
</comment>
<comment type="catalytic activity">
    <reaction>
        <text>(R)-mevalonate + 2 NADP(+) + CoA = (3S)-3-hydroxy-3-methylglutaryl-CoA + 2 NADPH + 2 H(+)</text>
        <dbReference type="Rhea" id="RHEA:15989"/>
        <dbReference type="ChEBI" id="CHEBI:15378"/>
        <dbReference type="ChEBI" id="CHEBI:36464"/>
        <dbReference type="ChEBI" id="CHEBI:43074"/>
        <dbReference type="ChEBI" id="CHEBI:57287"/>
        <dbReference type="ChEBI" id="CHEBI:57783"/>
        <dbReference type="ChEBI" id="CHEBI:58349"/>
        <dbReference type="EC" id="1.1.1.34"/>
    </reaction>
</comment>
<comment type="pathway">
    <text>Metabolic intermediate biosynthesis; (R)-mevalonate biosynthesis; (R)-mevalonate from acetyl-CoA: step 3/3.</text>
</comment>
<comment type="similarity">
    <text evidence="2">Belongs to the HMG-CoA reductase family.</text>
</comment>
<comment type="sequence caution" evidence="2">
    <conflict type="erroneous initiation">
        <sequence resource="EMBL-CDS" id="BAA30924"/>
    </conflict>
</comment>
<accession>O59469</accession>
<feature type="chain" id="PRO_0000114464" description="3-hydroxy-3-methylglutaryl-coenzyme A reductase">
    <location>
        <begin position="1"/>
        <end position="413"/>
    </location>
</feature>
<feature type="active site" description="Charge relay system" evidence="1">
    <location>
        <position position="106"/>
    </location>
</feature>
<feature type="active site" description="Charge relay system" evidence="1">
    <location>
        <position position="312"/>
    </location>
</feature>
<feature type="active site" description="Proton donor" evidence="1">
    <location>
        <position position="408"/>
    </location>
</feature>
<evidence type="ECO:0000250" key="1"/>
<evidence type="ECO:0000305" key="2"/>
<sequence length="413" mass="44554">MGGGNLNIEEIIEKVANGEIKFYQVEKYVNGDKRLATEIRRKALEKRLGIKLHHIGYYSIDPNELIGRNIENMIGVVQIPMGVAGPLKINGEYAKGEFYIPLATTEGALVASVNRGCSALTEAGGVVTTLIDDKMTRAPLIRCPNARRAREVAKWVEENLDYLQEKAVSKVTRHGKLRGVKPFIVGNNLYLRFEFETGDAMGMNMVTIASEEIMKVIEEEFPDVRYLALSGNLCVDKKPNAVNFILGRGKTVIAEAVVPRKIVEKKLKTTPELIAEVNYFKNLVGSAQAGSYGFNAHFANIVGAIFLATGQDEAQITEGAHGITIAEVTPDGDLYISITMPSLEIGTVGGGTRVPSQREALEIMGVAGGGDPPGINAKKFAEIVAGAVLAGELSLLAAIAAKHLARAHKMLGR</sequence>
<organism>
    <name type="scientific">Pyrococcus horikoshii (strain ATCC 700860 / DSM 12428 / JCM 9974 / NBRC 100139 / OT-3)</name>
    <dbReference type="NCBI Taxonomy" id="70601"/>
    <lineage>
        <taxon>Archaea</taxon>
        <taxon>Methanobacteriati</taxon>
        <taxon>Methanobacteriota</taxon>
        <taxon>Thermococci</taxon>
        <taxon>Thermococcales</taxon>
        <taxon>Thermococcaceae</taxon>
        <taxon>Pyrococcus</taxon>
    </lineage>
</organism>
<gene>
    <name type="primary">hmgA</name>
    <name type="ordered locus">PH1805</name>
</gene>